<protein>
    <recommendedName>
        <fullName evidence="1">Elongation factor P</fullName>
        <shortName evidence="1">EF-P</shortName>
    </recommendedName>
</protein>
<proteinExistence type="inferred from homology"/>
<feature type="chain" id="PRO_0000094201" description="Elongation factor P">
    <location>
        <begin position="1"/>
        <end position="191"/>
    </location>
</feature>
<reference key="1">
    <citation type="journal article" date="2004" name="Proc. Natl. Acad. Sci. U.S.A.">
        <title>The louse-borne human pathogen Bartonella quintana is a genomic derivative of the zoonotic agent Bartonella henselae.</title>
        <authorList>
            <person name="Alsmark U.C.M."/>
            <person name="Frank A.C."/>
            <person name="Karlberg E.O."/>
            <person name="Legault B.-A."/>
            <person name="Ardell D.H."/>
            <person name="Canbaeck B."/>
            <person name="Eriksson A.-S."/>
            <person name="Naeslund A.K."/>
            <person name="Handley S.A."/>
            <person name="Huvet M."/>
            <person name="La Scola B."/>
            <person name="Holmberg M."/>
            <person name="Andersson S.G.E."/>
        </authorList>
    </citation>
    <scope>NUCLEOTIDE SEQUENCE [LARGE SCALE GENOMIC DNA]</scope>
    <source>
        <strain>ATCC 49882 / DSM 28221 / CCUG 30454 / Houston 1</strain>
    </source>
</reference>
<evidence type="ECO:0000255" key="1">
    <source>
        <dbReference type="HAMAP-Rule" id="MF_00141"/>
    </source>
</evidence>
<comment type="function">
    <text evidence="1">Involved in peptide bond synthesis. Stimulates efficient translation and peptide-bond synthesis on native or reconstituted 70S ribosomes in vitro. Probably functions indirectly by altering the affinity of the ribosome for aminoacyl-tRNA, thus increasing their reactivity as acceptors for peptidyl transferase.</text>
</comment>
<comment type="pathway">
    <text evidence="1">Protein biosynthesis; polypeptide chain elongation.</text>
</comment>
<comment type="subcellular location">
    <subcellularLocation>
        <location evidence="1">Cytoplasm</location>
    </subcellularLocation>
</comment>
<comment type="similarity">
    <text evidence="1">Belongs to the elongation factor P family.</text>
</comment>
<accession>Q6G1Z7</accession>
<sequence length="191" mass="21412">MKINGNEIRPGNVIEHQGSLWVAVKCNAVKPGKGGAFNQVEMKNLIDGTKLNERFRAAETVERVRLEQKDFTFLYQQGDALIFMDSQSYEQLELQKDFVGERAAFLQDGMTVTVELYQEKPIGISLPDQVSVTIVEADPALKGQTVTASYKPAILENGIRILVPPFINAGERIIVDTNELIYVRRANEKDK</sequence>
<keyword id="KW-0963">Cytoplasm</keyword>
<keyword id="KW-0251">Elongation factor</keyword>
<keyword id="KW-0648">Protein biosynthesis</keyword>
<organism>
    <name type="scientific">Bartonella henselae (strain ATCC 49882 / DSM 28221 / CCUG 30454 / Houston 1)</name>
    <name type="common">Rochalimaea henselae</name>
    <dbReference type="NCBI Taxonomy" id="283166"/>
    <lineage>
        <taxon>Bacteria</taxon>
        <taxon>Pseudomonadati</taxon>
        <taxon>Pseudomonadota</taxon>
        <taxon>Alphaproteobacteria</taxon>
        <taxon>Hyphomicrobiales</taxon>
        <taxon>Bartonellaceae</taxon>
        <taxon>Bartonella</taxon>
    </lineage>
</organism>
<dbReference type="EMBL" id="BX897699">
    <property type="protein sequence ID" value="CAF28265.1"/>
    <property type="molecule type" value="Genomic_DNA"/>
</dbReference>
<dbReference type="RefSeq" id="WP_011181270.1">
    <property type="nucleotide sequence ID" value="NZ_LRIJ02000001.1"/>
</dbReference>
<dbReference type="SMR" id="Q6G1Z7"/>
<dbReference type="PaxDb" id="283166-BH15020"/>
<dbReference type="EnsemblBacteria" id="CAF28265">
    <property type="protein sequence ID" value="CAF28265"/>
    <property type="gene ID" value="BH15020"/>
</dbReference>
<dbReference type="GeneID" id="92986114"/>
<dbReference type="KEGG" id="bhe:BH15020"/>
<dbReference type="eggNOG" id="COG0231">
    <property type="taxonomic scope" value="Bacteria"/>
</dbReference>
<dbReference type="OrthoDB" id="9801844at2"/>
<dbReference type="UniPathway" id="UPA00345"/>
<dbReference type="Proteomes" id="UP000000421">
    <property type="component" value="Chromosome"/>
</dbReference>
<dbReference type="GO" id="GO:0005737">
    <property type="term" value="C:cytoplasm"/>
    <property type="evidence" value="ECO:0007669"/>
    <property type="project" value="UniProtKB-SubCell"/>
</dbReference>
<dbReference type="GO" id="GO:0003746">
    <property type="term" value="F:translation elongation factor activity"/>
    <property type="evidence" value="ECO:0007669"/>
    <property type="project" value="UniProtKB-UniRule"/>
</dbReference>
<dbReference type="GO" id="GO:0043043">
    <property type="term" value="P:peptide biosynthetic process"/>
    <property type="evidence" value="ECO:0007669"/>
    <property type="project" value="InterPro"/>
</dbReference>
<dbReference type="CDD" id="cd04470">
    <property type="entry name" value="S1_EF-P_repeat_1"/>
    <property type="match status" value="1"/>
</dbReference>
<dbReference type="CDD" id="cd05794">
    <property type="entry name" value="S1_EF-P_repeat_2"/>
    <property type="match status" value="1"/>
</dbReference>
<dbReference type="FunFam" id="2.30.30.30:FF:000003">
    <property type="entry name" value="Elongation factor P"/>
    <property type="match status" value="1"/>
</dbReference>
<dbReference type="FunFam" id="2.40.50.140:FF:000004">
    <property type="entry name" value="Elongation factor P"/>
    <property type="match status" value="1"/>
</dbReference>
<dbReference type="FunFam" id="2.40.50.140:FF:000009">
    <property type="entry name" value="Elongation factor P"/>
    <property type="match status" value="1"/>
</dbReference>
<dbReference type="Gene3D" id="2.30.30.30">
    <property type="match status" value="1"/>
</dbReference>
<dbReference type="Gene3D" id="2.40.50.140">
    <property type="entry name" value="Nucleic acid-binding proteins"/>
    <property type="match status" value="2"/>
</dbReference>
<dbReference type="HAMAP" id="MF_00141">
    <property type="entry name" value="EF_P"/>
    <property type="match status" value="1"/>
</dbReference>
<dbReference type="InterPro" id="IPR015365">
    <property type="entry name" value="Elong-fact-P_C"/>
</dbReference>
<dbReference type="InterPro" id="IPR012340">
    <property type="entry name" value="NA-bd_OB-fold"/>
</dbReference>
<dbReference type="InterPro" id="IPR014722">
    <property type="entry name" value="Rib_uL2_dom2"/>
</dbReference>
<dbReference type="InterPro" id="IPR020599">
    <property type="entry name" value="Transl_elong_fac_P/YeiP"/>
</dbReference>
<dbReference type="InterPro" id="IPR013185">
    <property type="entry name" value="Transl_elong_KOW-like"/>
</dbReference>
<dbReference type="InterPro" id="IPR001059">
    <property type="entry name" value="Transl_elong_P/YeiP_cen"/>
</dbReference>
<dbReference type="InterPro" id="IPR013852">
    <property type="entry name" value="Transl_elong_P/YeiP_CS"/>
</dbReference>
<dbReference type="InterPro" id="IPR011768">
    <property type="entry name" value="Transl_elongation_fac_P"/>
</dbReference>
<dbReference type="InterPro" id="IPR008991">
    <property type="entry name" value="Translation_prot_SH3-like_sf"/>
</dbReference>
<dbReference type="NCBIfam" id="TIGR00038">
    <property type="entry name" value="efp"/>
    <property type="match status" value="1"/>
</dbReference>
<dbReference type="NCBIfam" id="NF001810">
    <property type="entry name" value="PRK00529.1"/>
    <property type="match status" value="1"/>
</dbReference>
<dbReference type="PANTHER" id="PTHR30053">
    <property type="entry name" value="ELONGATION FACTOR P"/>
    <property type="match status" value="1"/>
</dbReference>
<dbReference type="PANTHER" id="PTHR30053:SF14">
    <property type="entry name" value="TRANSLATION ELONGATION FACTOR KOW-LIKE DOMAIN-CONTAINING PROTEIN"/>
    <property type="match status" value="1"/>
</dbReference>
<dbReference type="Pfam" id="PF01132">
    <property type="entry name" value="EFP"/>
    <property type="match status" value="1"/>
</dbReference>
<dbReference type="Pfam" id="PF08207">
    <property type="entry name" value="EFP_N"/>
    <property type="match status" value="1"/>
</dbReference>
<dbReference type="Pfam" id="PF09285">
    <property type="entry name" value="Elong-fact-P_C"/>
    <property type="match status" value="1"/>
</dbReference>
<dbReference type="PIRSF" id="PIRSF005901">
    <property type="entry name" value="EF-P"/>
    <property type="match status" value="1"/>
</dbReference>
<dbReference type="SMART" id="SM01185">
    <property type="entry name" value="EFP"/>
    <property type="match status" value="1"/>
</dbReference>
<dbReference type="SMART" id="SM00841">
    <property type="entry name" value="Elong-fact-P_C"/>
    <property type="match status" value="1"/>
</dbReference>
<dbReference type="SUPFAM" id="SSF50249">
    <property type="entry name" value="Nucleic acid-binding proteins"/>
    <property type="match status" value="2"/>
</dbReference>
<dbReference type="SUPFAM" id="SSF50104">
    <property type="entry name" value="Translation proteins SH3-like domain"/>
    <property type="match status" value="1"/>
</dbReference>
<dbReference type="PROSITE" id="PS01275">
    <property type="entry name" value="EFP"/>
    <property type="match status" value="1"/>
</dbReference>
<name>EFP_BARHE</name>
<gene>
    <name evidence="1" type="primary">efp</name>
    <name type="ordered locus">BH15020</name>
</gene>